<accession>O70055</accession>
<protein>
    <recommendedName>
        <fullName evidence="1">D-alanyl carrier protein</fullName>
        <shortName evidence="1">DCP</shortName>
    </recommendedName>
    <alternativeName>
        <fullName evidence="1">D-alanine--poly(phosphoribitol) ligase subunit 2</fullName>
    </alternativeName>
</protein>
<dbReference type="EMBL" id="AF049357">
    <property type="protein sequence ID" value="AAC06286.1"/>
    <property type="molecule type" value="Genomic_DNA"/>
</dbReference>
<dbReference type="EMBL" id="AF051356">
    <property type="protein sequence ID" value="AAC05776.1"/>
    <property type="molecule type" value="Genomic_DNA"/>
</dbReference>
<dbReference type="EMBL" id="AF050517">
    <property type="protein sequence ID" value="AAC29040.1"/>
    <property type="molecule type" value="Genomic_DNA"/>
</dbReference>
<dbReference type="EMBL" id="AE014133">
    <property type="protein sequence ID" value="AAN59326.1"/>
    <property type="molecule type" value="Genomic_DNA"/>
</dbReference>
<dbReference type="RefSeq" id="NP_722020.1">
    <property type="nucleotide sequence ID" value="NC_004350.2"/>
</dbReference>
<dbReference type="RefSeq" id="WP_002262584.1">
    <property type="nucleotide sequence ID" value="NC_004350.2"/>
</dbReference>
<dbReference type="SMR" id="O70055"/>
<dbReference type="STRING" id="210007.SMU_1689"/>
<dbReference type="GeneID" id="93858888"/>
<dbReference type="KEGG" id="smu:SMU_1689"/>
<dbReference type="PATRIC" id="fig|210007.7.peg.1509"/>
<dbReference type="eggNOG" id="COG0236">
    <property type="taxonomic scope" value="Bacteria"/>
</dbReference>
<dbReference type="HOGENOM" id="CLU_108696_19_0_9"/>
<dbReference type="OrthoDB" id="6462171at2"/>
<dbReference type="PhylomeDB" id="O70055"/>
<dbReference type="UniPathway" id="UPA00556"/>
<dbReference type="Proteomes" id="UP000002512">
    <property type="component" value="Chromosome"/>
</dbReference>
<dbReference type="GO" id="GO:0005737">
    <property type="term" value="C:cytoplasm"/>
    <property type="evidence" value="ECO:0007669"/>
    <property type="project" value="UniProtKB-SubCell"/>
</dbReference>
<dbReference type="GO" id="GO:0036370">
    <property type="term" value="F:D-alanyl carrier activity"/>
    <property type="evidence" value="ECO:0007669"/>
    <property type="project" value="UniProtKB-UniRule"/>
</dbReference>
<dbReference type="GO" id="GO:0071555">
    <property type="term" value="P:cell wall organization"/>
    <property type="evidence" value="ECO:0007669"/>
    <property type="project" value="UniProtKB-KW"/>
</dbReference>
<dbReference type="GO" id="GO:0070395">
    <property type="term" value="P:lipoteichoic acid biosynthetic process"/>
    <property type="evidence" value="ECO:0007669"/>
    <property type="project" value="UniProtKB-UniRule"/>
</dbReference>
<dbReference type="Gene3D" id="1.10.1200.10">
    <property type="entry name" value="ACP-like"/>
    <property type="match status" value="1"/>
</dbReference>
<dbReference type="HAMAP" id="MF_00565">
    <property type="entry name" value="DltC"/>
    <property type="match status" value="1"/>
</dbReference>
<dbReference type="InterPro" id="IPR036736">
    <property type="entry name" value="ACP-like_sf"/>
</dbReference>
<dbReference type="InterPro" id="IPR003230">
    <property type="entry name" value="DltC"/>
</dbReference>
<dbReference type="InterPro" id="IPR009081">
    <property type="entry name" value="PP-bd_ACP"/>
</dbReference>
<dbReference type="NCBIfam" id="TIGR01688">
    <property type="entry name" value="dltC"/>
    <property type="match status" value="1"/>
</dbReference>
<dbReference type="NCBIfam" id="NF003464">
    <property type="entry name" value="PRK05087.1"/>
    <property type="match status" value="1"/>
</dbReference>
<dbReference type="Pfam" id="PF00550">
    <property type="entry name" value="PP-binding"/>
    <property type="match status" value="1"/>
</dbReference>
<dbReference type="SUPFAM" id="SSF47336">
    <property type="entry name" value="ACP-like"/>
    <property type="match status" value="1"/>
</dbReference>
<dbReference type="PROSITE" id="PS50075">
    <property type="entry name" value="CARRIER"/>
    <property type="match status" value="1"/>
</dbReference>
<keyword id="KW-0961">Cell wall biogenesis/degradation</keyword>
<keyword id="KW-0963">Cytoplasm</keyword>
<keyword id="KW-0596">Phosphopantetheine</keyword>
<keyword id="KW-0597">Phosphoprotein</keyword>
<keyword id="KW-1185">Reference proteome</keyword>
<comment type="function">
    <text evidence="1">Carrier protein involved in the D-alanylation of lipoteichoic acid (LTA). The loading of thioester-linked D-alanine onto DltC is catalyzed by D-alanine--D-alanyl carrier protein ligase DltA. The DltC-carried D-alanyl group is further transferred to cell membrane phosphatidylglycerol (PG) by forming an ester bond, probably catalyzed by DltD. D-alanylation of LTA plays an important role in modulating the properties of the cell wall in Gram-positive bacteria, influencing the net charge of the cell wall.</text>
</comment>
<comment type="pathway">
    <text evidence="1">Cell wall biogenesis; lipoteichoic acid biosynthesis.</text>
</comment>
<comment type="subcellular location">
    <subcellularLocation>
        <location evidence="1">Cytoplasm</location>
    </subcellularLocation>
</comment>
<comment type="PTM">
    <text evidence="1">4'-phosphopantetheine is transferred from CoA to a specific serine of apo-DCP.</text>
</comment>
<comment type="similarity">
    <text evidence="1">Belongs to the DltC family.</text>
</comment>
<name>DLTC_STRMU</name>
<sequence>MDIKSEVLKIIDELFMEDVSDMMDEDLFDAGVLDSMGTVELIVELENHFDITVPVSEFGRDDWNTANKIIEGITELRNA</sequence>
<evidence type="ECO:0000255" key="1">
    <source>
        <dbReference type="HAMAP-Rule" id="MF_00565"/>
    </source>
</evidence>
<organism>
    <name type="scientific">Streptococcus mutans serotype c (strain ATCC 700610 / UA159)</name>
    <dbReference type="NCBI Taxonomy" id="210007"/>
    <lineage>
        <taxon>Bacteria</taxon>
        <taxon>Bacillati</taxon>
        <taxon>Bacillota</taxon>
        <taxon>Bacilli</taxon>
        <taxon>Lactobacillales</taxon>
        <taxon>Streptococcaceae</taxon>
        <taxon>Streptococcus</taxon>
    </lineage>
</organism>
<reference key="1">
    <citation type="journal article" date="1995" name="Infect. Immun.">
        <title>A Streptococcus mutans mutant that synthesizes elevated levels of intracellular polysaccharide is hypercariogenic in vivo.</title>
        <authorList>
            <person name="Spatafora G."/>
            <person name="Rohrer K."/>
            <person name="Barnard D."/>
            <person name="Michalek S."/>
        </authorList>
    </citation>
    <scope>NUCLEOTIDE SEQUENCE [GENOMIC DNA]</scope>
</reference>
<reference key="2">
    <citation type="journal article" date="2000" name="J. Bacteriol.">
        <title>Defects in D-alanyl-lipoteichoic acid synthesis in Streptococcus mutans results in acid sensitivity.</title>
        <authorList>
            <person name="Boyd D.A."/>
            <person name="Cvitkovitch D.G."/>
            <person name="Bleiweis A.S."/>
            <person name="Kiriukhin M.Y."/>
            <person name="Debabov D.V."/>
            <person name="Neuhaus F.C."/>
            <person name="Hamilton I.R."/>
        </authorList>
    </citation>
    <scope>NUCLEOTIDE SEQUENCE [GENOMIC DNA]</scope>
    <source>
        <strain>LT11</strain>
    </source>
</reference>
<reference key="3">
    <citation type="journal article" date="2002" name="Proc. Natl. Acad. Sci. U.S.A.">
        <title>Genome sequence of Streptococcus mutans UA159, a cariogenic dental pathogen.</title>
        <authorList>
            <person name="Ajdic D.J."/>
            <person name="McShan W.M."/>
            <person name="McLaughlin R.E."/>
            <person name="Savic G."/>
            <person name="Chang J."/>
            <person name="Carson M.B."/>
            <person name="Primeaux C."/>
            <person name="Tian R."/>
            <person name="Kenton S."/>
            <person name="Jia H.G."/>
            <person name="Lin S.P."/>
            <person name="Qian Y."/>
            <person name="Li S."/>
            <person name="Zhu H."/>
            <person name="Najar F.Z."/>
            <person name="Lai H."/>
            <person name="White J."/>
            <person name="Roe B.A."/>
            <person name="Ferretti J.J."/>
        </authorList>
    </citation>
    <scope>NUCLEOTIDE SEQUENCE [LARGE SCALE GENOMIC DNA]</scope>
    <source>
        <strain>ATCC 700610 / UA159</strain>
    </source>
</reference>
<proteinExistence type="inferred from homology"/>
<feature type="chain" id="PRO_0000213111" description="D-alanyl carrier protein">
    <location>
        <begin position="1"/>
        <end position="79"/>
    </location>
</feature>
<feature type="domain" description="Carrier" evidence="1">
    <location>
        <begin position="1"/>
        <end position="77"/>
    </location>
</feature>
<feature type="modified residue" description="O-(pantetheine 4'-phosphoryl)serine" evidence="1">
    <location>
        <position position="35"/>
    </location>
</feature>
<gene>
    <name evidence="1" type="primary">dltC</name>
    <name type="synonym">glg3</name>
    <name type="ordered locus">SMU_1689</name>
</gene>